<evidence type="ECO:0000255" key="1">
    <source>
        <dbReference type="HAMAP-Rule" id="MF_00380"/>
    </source>
</evidence>
<evidence type="ECO:0000256" key="2">
    <source>
        <dbReference type="SAM" id="MobiDB-lite"/>
    </source>
</evidence>
<keyword id="KW-0233">DNA recombination</keyword>
<keyword id="KW-0238">DNA-binding</keyword>
<keyword id="KW-1185">Reference proteome</keyword>
<keyword id="KW-0804">Transcription</keyword>
<keyword id="KW-0805">Transcription regulation</keyword>
<keyword id="KW-0810">Translation regulation</keyword>
<proteinExistence type="inferred from homology"/>
<sequence>MALTKAEMSEYLFDKLGLSKRDAKELVELFFEEIRRALENGEQVKLSGFGNFDLRDKNQRPGRNPKTGEDIPITARRVVTFRPGQKLKSRVENASPKDE</sequence>
<accession>B7MAS3</accession>
<reference key="1">
    <citation type="journal article" date="2009" name="PLoS Genet.">
        <title>Organised genome dynamics in the Escherichia coli species results in highly diverse adaptive paths.</title>
        <authorList>
            <person name="Touchon M."/>
            <person name="Hoede C."/>
            <person name="Tenaillon O."/>
            <person name="Barbe V."/>
            <person name="Baeriswyl S."/>
            <person name="Bidet P."/>
            <person name="Bingen E."/>
            <person name="Bonacorsi S."/>
            <person name="Bouchier C."/>
            <person name="Bouvet O."/>
            <person name="Calteau A."/>
            <person name="Chiapello H."/>
            <person name="Clermont O."/>
            <person name="Cruveiller S."/>
            <person name="Danchin A."/>
            <person name="Diard M."/>
            <person name="Dossat C."/>
            <person name="Karoui M.E."/>
            <person name="Frapy E."/>
            <person name="Garry L."/>
            <person name="Ghigo J.M."/>
            <person name="Gilles A.M."/>
            <person name="Johnson J."/>
            <person name="Le Bouguenec C."/>
            <person name="Lescat M."/>
            <person name="Mangenot S."/>
            <person name="Martinez-Jehanne V."/>
            <person name="Matic I."/>
            <person name="Nassif X."/>
            <person name="Oztas S."/>
            <person name="Petit M.A."/>
            <person name="Pichon C."/>
            <person name="Rouy Z."/>
            <person name="Ruf C.S."/>
            <person name="Schneider D."/>
            <person name="Tourret J."/>
            <person name="Vacherie B."/>
            <person name="Vallenet D."/>
            <person name="Medigue C."/>
            <person name="Rocha E.P.C."/>
            <person name="Denamur E."/>
        </authorList>
    </citation>
    <scope>NUCLEOTIDE SEQUENCE [LARGE SCALE GENOMIC DNA]</scope>
    <source>
        <strain>S88 / ExPEC</strain>
    </source>
</reference>
<feature type="chain" id="PRO_1000122134" description="Integration host factor subunit alpha">
    <location>
        <begin position="1"/>
        <end position="99"/>
    </location>
</feature>
<feature type="region of interest" description="Disordered" evidence="2">
    <location>
        <begin position="49"/>
        <end position="73"/>
    </location>
</feature>
<gene>
    <name evidence="1" type="primary">ihfA</name>
    <name evidence="1" type="synonym">himA</name>
    <name type="ordered locus">ECS88_1763</name>
</gene>
<dbReference type="EMBL" id="CU928161">
    <property type="protein sequence ID" value="CAR03072.1"/>
    <property type="molecule type" value="Genomic_DNA"/>
</dbReference>
<dbReference type="RefSeq" id="WP_001229265.1">
    <property type="nucleotide sequence ID" value="NC_011742.1"/>
</dbReference>
<dbReference type="EMDB" id="EMD-8827"/>
<dbReference type="SMR" id="B7MAS3"/>
<dbReference type="GeneID" id="93775925"/>
<dbReference type="KEGG" id="ecz:ECS88_1763"/>
<dbReference type="HOGENOM" id="CLU_105066_1_3_6"/>
<dbReference type="Proteomes" id="UP000000747">
    <property type="component" value="Chromosome"/>
</dbReference>
<dbReference type="GO" id="GO:0005829">
    <property type="term" value="C:cytosol"/>
    <property type="evidence" value="ECO:0007669"/>
    <property type="project" value="TreeGrafter"/>
</dbReference>
<dbReference type="GO" id="GO:0003677">
    <property type="term" value="F:DNA binding"/>
    <property type="evidence" value="ECO:0007669"/>
    <property type="project" value="UniProtKB-UniRule"/>
</dbReference>
<dbReference type="GO" id="GO:0030527">
    <property type="term" value="F:structural constituent of chromatin"/>
    <property type="evidence" value="ECO:0007669"/>
    <property type="project" value="InterPro"/>
</dbReference>
<dbReference type="GO" id="GO:0006310">
    <property type="term" value="P:DNA recombination"/>
    <property type="evidence" value="ECO:0007669"/>
    <property type="project" value="UniProtKB-UniRule"/>
</dbReference>
<dbReference type="GO" id="GO:0009893">
    <property type="term" value="P:positive regulation of metabolic process"/>
    <property type="evidence" value="ECO:0007669"/>
    <property type="project" value="UniProtKB-ARBA"/>
</dbReference>
<dbReference type="GO" id="GO:0006355">
    <property type="term" value="P:regulation of DNA-templated transcription"/>
    <property type="evidence" value="ECO:0007669"/>
    <property type="project" value="UniProtKB-UniRule"/>
</dbReference>
<dbReference type="GO" id="GO:0006417">
    <property type="term" value="P:regulation of translation"/>
    <property type="evidence" value="ECO:0007669"/>
    <property type="project" value="UniProtKB-UniRule"/>
</dbReference>
<dbReference type="CDD" id="cd13835">
    <property type="entry name" value="IHF_A"/>
    <property type="match status" value="1"/>
</dbReference>
<dbReference type="FunFam" id="4.10.520.10:FF:000002">
    <property type="entry name" value="Integration host factor subunit alpha"/>
    <property type="match status" value="1"/>
</dbReference>
<dbReference type="Gene3D" id="4.10.520.10">
    <property type="entry name" value="IHF-like DNA-binding proteins"/>
    <property type="match status" value="1"/>
</dbReference>
<dbReference type="HAMAP" id="MF_00380">
    <property type="entry name" value="IHF_alpha"/>
    <property type="match status" value="1"/>
</dbReference>
<dbReference type="InterPro" id="IPR000119">
    <property type="entry name" value="Hist_DNA-bd"/>
</dbReference>
<dbReference type="InterPro" id="IPR020816">
    <property type="entry name" value="Histone-like_DNA-bd_CS"/>
</dbReference>
<dbReference type="InterPro" id="IPR010992">
    <property type="entry name" value="IHF-like_DNA-bd_dom_sf"/>
</dbReference>
<dbReference type="InterPro" id="IPR005684">
    <property type="entry name" value="IHF_alpha"/>
</dbReference>
<dbReference type="NCBIfam" id="TIGR00987">
    <property type="entry name" value="himA"/>
    <property type="match status" value="1"/>
</dbReference>
<dbReference type="NCBIfam" id="NF001401">
    <property type="entry name" value="PRK00285.1"/>
    <property type="match status" value="1"/>
</dbReference>
<dbReference type="PANTHER" id="PTHR33175">
    <property type="entry name" value="DNA-BINDING PROTEIN HU"/>
    <property type="match status" value="1"/>
</dbReference>
<dbReference type="PANTHER" id="PTHR33175:SF2">
    <property type="entry name" value="INTEGRATION HOST FACTOR SUBUNIT ALPHA"/>
    <property type="match status" value="1"/>
</dbReference>
<dbReference type="Pfam" id="PF00216">
    <property type="entry name" value="Bac_DNA_binding"/>
    <property type="match status" value="1"/>
</dbReference>
<dbReference type="PRINTS" id="PR01727">
    <property type="entry name" value="DNABINDINGHU"/>
</dbReference>
<dbReference type="SMART" id="SM00411">
    <property type="entry name" value="BHL"/>
    <property type="match status" value="1"/>
</dbReference>
<dbReference type="SUPFAM" id="SSF47729">
    <property type="entry name" value="IHF-like DNA-binding proteins"/>
    <property type="match status" value="1"/>
</dbReference>
<dbReference type="PROSITE" id="PS00045">
    <property type="entry name" value="HISTONE_LIKE"/>
    <property type="match status" value="1"/>
</dbReference>
<organism>
    <name type="scientific">Escherichia coli O45:K1 (strain S88 / ExPEC)</name>
    <dbReference type="NCBI Taxonomy" id="585035"/>
    <lineage>
        <taxon>Bacteria</taxon>
        <taxon>Pseudomonadati</taxon>
        <taxon>Pseudomonadota</taxon>
        <taxon>Gammaproteobacteria</taxon>
        <taxon>Enterobacterales</taxon>
        <taxon>Enterobacteriaceae</taxon>
        <taxon>Escherichia</taxon>
    </lineage>
</organism>
<comment type="function">
    <text evidence="1">This protein is one of the two subunits of integration host factor, a specific DNA-binding protein that functions in genetic recombination as well as in transcriptional and translational control.</text>
</comment>
<comment type="subunit">
    <text evidence="1">Heterodimer of an alpha and a beta chain.</text>
</comment>
<comment type="similarity">
    <text evidence="1">Belongs to the bacterial histone-like protein family.</text>
</comment>
<protein>
    <recommendedName>
        <fullName evidence="1">Integration host factor subunit alpha</fullName>
        <shortName evidence="1">IHF-alpha</shortName>
    </recommendedName>
</protein>
<name>IHFA_ECO45</name>